<evidence type="ECO:0000250" key="1"/>
<evidence type="ECO:0000250" key="2">
    <source>
        <dbReference type="UniProtKB" id="Q9CQY5"/>
    </source>
</evidence>
<evidence type="ECO:0000250" key="3">
    <source>
        <dbReference type="UniProtKB" id="Q9H0U3"/>
    </source>
</evidence>
<evidence type="ECO:0000255" key="4"/>
<evidence type="ECO:0000269" key="5">
    <source>
    </source>
</evidence>
<evidence type="ECO:0000305" key="6"/>
<reference key="1">
    <citation type="submission" date="2003-01" db="EMBL/GenBank/DDBJ databases">
        <authorList>
            <consortium name="NIH - Zebrafish Gene Collection (ZGC) project"/>
        </authorList>
    </citation>
    <scope>NUCLEOTIDE SEQUENCE [LARGE SCALE MRNA]</scope>
</reference>
<reference key="2">
    <citation type="journal article" date="2009" name="Proc. Natl. Acad. Sci. U.S.A.">
        <title>Mammalian MagT1 and TUSC3 are required for cellular magnesium uptake and vertebrate embryonic development.</title>
        <authorList>
            <person name="Zhou H."/>
            <person name="Clapham D.E."/>
        </authorList>
    </citation>
    <scope>FUNCTION</scope>
    <scope>SUBCELLULAR LOCATION</scope>
    <scope>DISRUPTION PHENOTYPE</scope>
    <scope>TOPOLOGY</scope>
</reference>
<feature type="signal peptide" evidence="4">
    <location>
        <begin position="1"/>
        <end position="22"/>
    </location>
</feature>
<feature type="chain" id="PRO_0000246061" description="Dolichyl-diphosphooligosaccharide--protein glycosyltransferase subunit MAGT1">
    <location>
        <begin position="23"/>
        <end position="328"/>
    </location>
</feature>
<feature type="topological domain" description="Extracellular" evidence="4">
    <location>
        <begin position="23"/>
        <end position="177"/>
    </location>
</feature>
<feature type="transmembrane region" description="Helical" evidence="4">
    <location>
        <begin position="178"/>
        <end position="198"/>
    </location>
</feature>
<feature type="topological domain" description="Cytoplasmic" evidence="4">
    <location>
        <begin position="199"/>
        <end position="202"/>
    </location>
</feature>
<feature type="transmembrane region" description="Helical" evidence="4">
    <location>
        <begin position="203"/>
        <end position="223"/>
    </location>
</feature>
<feature type="topological domain" description="Extracellular" evidence="4">
    <location>
        <begin position="224"/>
        <end position="257"/>
    </location>
</feature>
<feature type="transmembrane region" description="Helical" evidence="4">
    <location>
        <begin position="258"/>
        <end position="278"/>
    </location>
</feature>
<feature type="topological domain" description="Cytoplasmic" evidence="4">
    <location>
        <begin position="279"/>
        <end position="293"/>
    </location>
</feature>
<feature type="transmembrane region" description="Helical" evidence="4">
    <location>
        <begin position="294"/>
        <end position="314"/>
    </location>
</feature>
<feature type="topological domain" description="Extracellular" evidence="4">
    <location>
        <begin position="315"/>
        <end position="328"/>
    </location>
</feature>
<feature type="domain" description="Thioredoxin">
    <location>
        <begin position="40"/>
        <end position="168"/>
    </location>
</feature>
<feature type="glycosylation site" description="N-linked (GlcNAc...) asparagine" evidence="4">
    <location>
        <position position="64"/>
    </location>
</feature>
<feature type="disulfide bond" description="Redox-active" evidence="1">
    <location>
        <begin position="80"/>
        <end position="83"/>
    </location>
</feature>
<proteinExistence type="evidence at protein level"/>
<sequence length="328" mass="37422">MLHKLLIVVFLVVCLHDMRLNGQKKKETLLSEKVSQMMEWVSKRAVVRLNGEKFKRLVRAHPRNYSVIVMFTALQPQRQCGVCRQADEEYQILANSWRYSSAFTNRIFFAMVDFDEGSDVFQMLNMNSAPTFINFPAKGKPKRADTYELQVRGFAAEQLARWVADRTDVHIRVIRPPNYAGPLMLGLLLAFIGSLAYLRRNNLEFLFNKNVWAFSALCFVLIMTSGQMWNHIRGPPYAHKNPNTGQVSYIHGSSQAQFVAETHIVLLFNAAVTIGMVLLHEAATSGLDIVKRKIMCVAGIGLVVLFFSWLLSVFRAKYHGYPYSFLFG</sequence>
<dbReference type="EMBL" id="BC046002">
    <property type="protein sequence ID" value="AAH46002.1"/>
    <property type="molecule type" value="mRNA"/>
</dbReference>
<dbReference type="RefSeq" id="NP_955994.1">
    <property type="nucleotide sequence ID" value="NM_199700.1"/>
</dbReference>
<dbReference type="SMR" id="Q7ZV50"/>
<dbReference type="FunCoup" id="Q7ZV50">
    <property type="interactions" value="1468"/>
</dbReference>
<dbReference type="STRING" id="7955.ENSDARP00000075309"/>
<dbReference type="TCDB" id="1.A.76.1.3">
    <property type="family name" value="the magnesium transporter1 (magt1) family"/>
</dbReference>
<dbReference type="GlyCosmos" id="Q7ZV50">
    <property type="glycosylation" value="1 site, No reported glycans"/>
</dbReference>
<dbReference type="PaxDb" id="7955-ENSDARP00000075309"/>
<dbReference type="Ensembl" id="ENSDART00000080864">
    <property type="protein sequence ID" value="ENSDARP00000075309"/>
    <property type="gene ID" value="ENSDARG00000058062"/>
</dbReference>
<dbReference type="GeneID" id="324944"/>
<dbReference type="KEGG" id="dre:324944"/>
<dbReference type="AGR" id="ZFIN:ZDB-GENE-030131-3667"/>
<dbReference type="CTD" id="84061"/>
<dbReference type="ZFIN" id="ZDB-GENE-030131-3667">
    <property type="gene designation" value="magt1"/>
</dbReference>
<dbReference type="eggNOG" id="KOG2603">
    <property type="taxonomic scope" value="Eukaryota"/>
</dbReference>
<dbReference type="HOGENOM" id="CLU_052855_0_0_1"/>
<dbReference type="InParanoid" id="Q7ZV50"/>
<dbReference type="OMA" id="HEPGHAQ"/>
<dbReference type="OrthoDB" id="67566at2759"/>
<dbReference type="PhylomeDB" id="Q7ZV50"/>
<dbReference type="TreeFam" id="TF314850"/>
<dbReference type="Reactome" id="R-DRE-5223345">
    <property type="pathway name" value="Miscellaneous transport and binding events"/>
</dbReference>
<dbReference type="Reactome" id="R-DRE-6798695">
    <property type="pathway name" value="Neutrophil degranulation"/>
</dbReference>
<dbReference type="UniPathway" id="UPA00378"/>
<dbReference type="PRO" id="PR:Q7ZV50"/>
<dbReference type="Proteomes" id="UP000000437">
    <property type="component" value="Chromosome 14"/>
</dbReference>
<dbReference type="Bgee" id="ENSDARG00000058062">
    <property type="expression patterns" value="Expressed in granulocyte and 27 other cell types or tissues"/>
</dbReference>
<dbReference type="ExpressionAtlas" id="Q7ZV50">
    <property type="expression patterns" value="baseline"/>
</dbReference>
<dbReference type="GO" id="GO:0008250">
    <property type="term" value="C:oligosaccharyltransferase complex"/>
    <property type="evidence" value="ECO:0000318"/>
    <property type="project" value="GO_Central"/>
</dbReference>
<dbReference type="GO" id="GO:0005886">
    <property type="term" value="C:plasma membrane"/>
    <property type="evidence" value="ECO:0007669"/>
    <property type="project" value="UniProtKB-SubCell"/>
</dbReference>
<dbReference type="GO" id="GO:0015693">
    <property type="term" value="P:magnesium ion transport"/>
    <property type="evidence" value="ECO:0000316"/>
    <property type="project" value="ZFIN"/>
</dbReference>
<dbReference type="GO" id="GO:0018279">
    <property type="term" value="P:protein N-linked glycosylation via asparagine"/>
    <property type="evidence" value="ECO:0000318"/>
    <property type="project" value="GO_Central"/>
</dbReference>
<dbReference type="CDD" id="cd02961">
    <property type="entry name" value="PDI_a_family"/>
    <property type="match status" value="1"/>
</dbReference>
<dbReference type="FunFam" id="3.40.30.10:FF:000009">
    <property type="entry name" value="Tumor suppressor candidate 3"/>
    <property type="match status" value="1"/>
</dbReference>
<dbReference type="Gene3D" id="3.40.30.10">
    <property type="entry name" value="Glutaredoxin"/>
    <property type="match status" value="1"/>
</dbReference>
<dbReference type="InterPro" id="IPR021149">
    <property type="entry name" value="OligosaccharylTrfase_OST3/OST6"/>
</dbReference>
<dbReference type="InterPro" id="IPR036249">
    <property type="entry name" value="Thioredoxin-like_sf"/>
</dbReference>
<dbReference type="PANTHER" id="PTHR12692">
    <property type="entry name" value="DOLICHYL-DIPHOSPHOOLIGOSACCHARIDE--PROTEIN GLYCOSYLTRANSFERASE-RELATED"/>
    <property type="match status" value="1"/>
</dbReference>
<dbReference type="PANTHER" id="PTHR12692:SF2">
    <property type="entry name" value="MAGNESIUM TRANSPORTER PROTEIN 1"/>
    <property type="match status" value="1"/>
</dbReference>
<dbReference type="Pfam" id="PF04756">
    <property type="entry name" value="OST3_OST6"/>
    <property type="match status" value="1"/>
</dbReference>
<dbReference type="SUPFAM" id="SSF52833">
    <property type="entry name" value="Thioredoxin-like"/>
    <property type="match status" value="1"/>
</dbReference>
<comment type="function">
    <text evidence="2 3 5">Accessory component of the STT3B-containing form of the N-oligosaccharyl transferase (OST) complex which catalyzes the transfer of a high mannose oligosaccharide from a lipid-linked oligosaccharide donor to an asparagine residue within an Asn-X-Ser/Thr consensus motif in nascent polypeptide chains. Involved in N-glycosylation of STT3B-dependent substrates. Specifically required for the glycosylation of a subset of acceptor sites that are near cysteine residues; in this function seems to act redundantly with TUSC3. In its oxidized form proposed to form transient mixed disulfides with a glycoprotein substrate to facilitate access of STT3B to the unmodified acceptor site. Also has oxidoreductase-independent functions in the STT3B-containing OST complex possibly involving substrate recognition. Could indirectly play a role in Mg(2+) transport (PubMed:19717468).</text>
</comment>
<comment type="pathway">
    <text evidence="3">Protein modification; protein glycosylation.</text>
</comment>
<comment type="subunit">
    <text evidence="3">Accessory component of the STT3B-containing form of the oligosaccharyltransferase (OST) complex.</text>
</comment>
<comment type="subcellular location">
    <subcellularLocation>
        <location evidence="3">Cell membrane</location>
        <topology evidence="3">Multi-pass membrane protein</topology>
    </subcellularLocation>
    <subcellularLocation>
        <location evidence="3">Endoplasmic reticulum</location>
    </subcellularLocation>
    <subcellularLocation>
        <location evidence="1">Endoplasmic reticulum membrane</location>
        <topology evidence="1">Multi-pass membrane protein</topology>
    </subcellularLocation>
</comment>
<comment type="disruption phenotype">
    <text evidence="5">Early developmental arrest.</text>
</comment>
<comment type="similarity">
    <text evidence="6">Belongs to the OST3/OST6 family.</text>
</comment>
<protein>
    <recommendedName>
        <fullName>Dolichyl-diphosphooligosaccharide--protein glycosyltransferase subunit MAGT1</fullName>
        <shortName>Oligosaccharyl transferase subunit MAGT1</shortName>
    </recommendedName>
    <alternativeName>
        <fullName evidence="3">Magnesium transporter protein 1</fullName>
        <shortName>MagT1</shortName>
    </alternativeName>
</protein>
<accession>Q7ZV50</accession>
<gene>
    <name evidence="3" type="primary">magt1</name>
    <name type="ORF">zgc:56218</name>
</gene>
<name>MAGT1_DANRE</name>
<keyword id="KW-1003">Cell membrane</keyword>
<keyword id="KW-1015">Disulfide bond</keyword>
<keyword id="KW-0256">Endoplasmic reticulum</keyword>
<keyword id="KW-0325">Glycoprotein</keyword>
<keyword id="KW-0460">Magnesium</keyword>
<keyword id="KW-0472">Membrane</keyword>
<keyword id="KW-1185">Reference proteome</keyword>
<keyword id="KW-0732">Signal</keyword>
<keyword id="KW-0812">Transmembrane</keyword>
<keyword id="KW-1133">Transmembrane helix</keyword>
<keyword id="KW-0813">Transport</keyword>
<organism>
    <name type="scientific">Danio rerio</name>
    <name type="common">Zebrafish</name>
    <name type="synonym">Brachydanio rerio</name>
    <dbReference type="NCBI Taxonomy" id="7955"/>
    <lineage>
        <taxon>Eukaryota</taxon>
        <taxon>Metazoa</taxon>
        <taxon>Chordata</taxon>
        <taxon>Craniata</taxon>
        <taxon>Vertebrata</taxon>
        <taxon>Euteleostomi</taxon>
        <taxon>Actinopterygii</taxon>
        <taxon>Neopterygii</taxon>
        <taxon>Teleostei</taxon>
        <taxon>Ostariophysi</taxon>
        <taxon>Cypriniformes</taxon>
        <taxon>Danionidae</taxon>
        <taxon>Danioninae</taxon>
        <taxon>Danio</taxon>
    </lineage>
</organism>